<dbReference type="EMBL" id="CP001999">
    <property type="protein sequence ID" value="ADG92421.1"/>
    <property type="molecule type" value="Genomic_DNA"/>
</dbReference>
<dbReference type="RefSeq" id="WP_013134566.1">
    <property type="nucleotide sequence ID" value="NC_014166.1"/>
</dbReference>
<dbReference type="STRING" id="572480.Arnit_0756"/>
<dbReference type="KEGG" id="ant:Arnit_0756"/>
<dbReference type="eggNOG" id="ENOG5032SZ8">
    <property type="taxonomic scope" value="Bacteria"/>
</dbReference>
<dbReference type="HOGENOM" id="CLU_149349_0_0_7"/>
<dbReference type="OrthoDB" id="7689335at2"/>
<dbReference type="Proteomes" id="UP000000939">
    <property type="component" value="Chromosome"/>
</dbReference>
<dbReference type="GO" id="GO:0009399">
    <property type="term" value="P:nitrogen fixation"/>
    <property type="evidence" value="ECO:0007669"/>
    <property type="project" value="UniProtKB-KW"/>
</dbReference>
<dbReference type="HAMAP" id="MF_02117">
    <property type="entry name" value="CowN"/>
    <property type="match status" value="1"/>
</dbReference>
<dbReference type="InterPro" id="IPR024899">
    <property type="entry name" value="CowN"/>
</dbReference>
<dbReference type="NCBIfam" id="NF033689">
    <property type="entry name" value="N2Fix_CO_CowN"/>
    <property type="match status" value="1"/>
</dbReference>
<dbReference type="Pfam" id="PF20543">
    <property type="entry name" value="CowN"/>
    <property type="match status" value="1"/>
</dbReference>
<name>COWN_ARCNC</name>
<proteinExistence type="inferred from homology"/>
<feature type="chain" id="PRO_0000407248" description="N(2)-fixation sustaining protein CowN">
    <location>
        <begin position="1"/>
        <end position="104"/>
    </location>
</feature>
<gene>
    <name evidence="1" type="primary">cowN</name>
    <name type="ordered locus">Arnit_0756</name>
</gene>
<accession>D5V2I8</accession>
<organism>
    <name type="scientific">Arcobacter nitrofigilis (strain ATCC 33309 / DSM 7299 / CCUG 15893 / LMG 7604 / NCTC 12251 / CI)</name>
    <name type="common">Campylobacter nitrofigilis</name>
    <dbReference type="NCBI Taxonomy" id="572480"/>
    <lineage>
        <taxon>Bacteria</taxon>
        <taxon>Pseudomonadati</taxon>
        <taxon>Campylobacterota</taxon>
        <taxon>Epsilonproteobacteria</taxon>
        <taxon>Campylobacterales</taxon>
        <taxon>Arcobacteraceae</taxon>
        <taxon>Arcobacter</taxon>
    </lineage>
</organism>
<sequence length="104" mass="12313">MSNFEIRVNESYESFKNIDCFENACVVIDNMLRVLENPKNMNIYWKKIVPMIPKAYYDRDPKSDTKEELLYLVCSNSFYLDELFEKAEDEQAINALSKCEQECC</sequence>
<protein>
    <recommendedName>
        <fullName evidence="1">N(2)-fixation sustaining protein CowN</fullName>
    </recommendedName>
    <alternativeName>
        <fullName evidence="1">CO weal-nitrogenase</fullName>
    </alternativeName>
</protein>
<reference key="1">
    <citation type="journal article" date="2010" name="Stand. Genomic Sci.">
        <title>Complete genome sequence of Arcobacter nitrofigilis type strain (CI).</title>
        <authorList>
            <person name="Pati A."/>
            <person name="Gronow S."/>
            <person name="Lapidus A."/>
            <person name="Copeland A."/>
            <person name="Glavina Del Rio T."/>
            <person name="Nolan M."/>
            <person name="Lucas S."/>
            <person name="Tice H."/>
            <person name="Cheng J.F."/>
            <person name="Han C."/>
            <person name="Chertkov O."/>
            <person name="Bruce D."/>
            <person name="Tapia R."/>
            <person name="Goodwin L."/>
            <person name="Pitluck S."/>
            <person name="Liolios K."/>
            <person name="Ivanova N."/>
            <person name="Mavromatis K."/>
            <person name="Chen A."/>
            <person name="Palaniappan K."/>
            <person name="Land M."/>
            <person name="Hauser L."/>
            <person name="Chang Y.J."/>
            <person name="Jeffries C.D."/>
            <person name="Detter J.C."/>
            <person name="Rohde M."/>
            <person name="Goker M."/>
            <person name="Bristow J."/>
            <person name="Eisen J.A."/>
            <person name="Markowitz V."/>
            <person name="Hugenholtz P."/>
            <person name="Klenk H.P."/>
            <person name="Kyrpides N.C."/>
        </authorList>
    </citation>
    <scope>NUCLEOTIDE SEQUENCE [LARGE SCALE GENOMIC DNA]</scope>
    <source>
        <strain>ATCC 33309 / DSM 7299 / CCUG 15893 / LMG 7604 / NCTC 12251 / CI</strain>
    </source>
</reference>
<keyword id="KW-0535">Nitrogen fixation</keyword>
<keyword id="KW-1185">Reference proteome</keyword>
<evidence type="ECO:0000255" key="1">
    <source>
        <dbReference type="HAMAP-Rule" id="MF_02117"/>
    </source>
</evidence>
<comment type="function">
    <text evidence="1">Is required to sustain N(2)-dependent growth in the presence of low levels of carbon monoxide (CO). Probably acts by protecting the N(2) fixation ability of the nitrogenase complex, which is inactivated in the presence of CO.</text>
</comment>
<comment type="similarity">
    <text evidence="1">Belongs to the CowN family.</text>
</comment>